<sequence>MLILTRRVGETLMIGDEVTVTVLGVKGNQVRIGVNAPKEVSVHREEIYQRIQSEKSGSPSEGGNF</sequence>
<organism>
    <name type="scientific">Shewanella sp. (strain W3-18-1)</name>
    <dbReference type="NCBI Taxonomy" id="351745"/>
    <lineage>
        <taxon>Bacteria</taxon>
        <taxon>Pseudomonadati</taxon>
        <taxon>Pseudomonadota</taxon>
        <taxon>Gammaproteobacteria</taxon>
        <taxon>Alteromonadales</taxon>
        <taxon>Shewanellaceae</taxon>
        <taxon>Shewanella</taxon>
    </lineage>
</organism>
<reference key="1">
    <citation type="submission" date="2006-12" db="EMBL/GenBank/DDBJ databases">
        <title>Complete sequence of Shewanella sp. W3-18-1.</title>
        <authorList>
            <consortium name="US DOE Joint Genome Institute"/>
            <person name="Copeland A."/>
            <person name="Lucas S."/>
            <person name="Lapidus A."/>
            <person name="Barry K."/>
            <person name="Detter J.C."/>
            <person name="Glavina del Rio T."/>
            <person name="Hammon N."/>
            <person name="Israni S."/>
            <person name="Dalin E."/>
            <person name="Tice H."/>
            <person name="Pitluck S."/>
            <person name="Chain P."/>
            <person name="Malfatti S."/>
            <person name="Shin M."/>
            <person name="Vergez L."/>
            <person name="Schmutz J."/>
            <person name="Larimer F."/>
            <person name="Land M."/>
            <person name="Hauser L."/>
            <person name="Kyrpides N."/>
            <person name="Lykidis A."/>
            <person name="Tiedje J."/>
            <person name="Richardson P."/>
        </authorList>
    </citation>
    <scope>NUCLEOTIDE SEQUENCE [LARGE SCALE GENOMIC DNA]</scope>
    <source>
        <strain>W3-18-1</strain>
    </source>
</reference>
<feature type="chain" id="PRO_1000023425" description="Translational regulator CsrA">
    <location>
        <begin position="1"/>
        <end position="65"/>
    </location>
</feature>
<gene>
    <name evidence="1" type="primary">csrA</name>
    <name type="ordered locus">Sputw3181_1269</name>
</gene>
<name>CSRA_SHESW</name>
<accession>A1RHG7</accession>
<proteinExistence type="inferred from homology"/>
<protein>
    <recommendedName>
        <fullName evidence="1">Translational regulator CsrA</fullName>
    </recommendedName>
    <alternativeName>
        <fullName evidence="1">Carbon storage regulator</fullName>
    </alternativeName>
</protein>
<dbReference type="EMBL" id="CP000503">
    <property type="protein sequence ID" value="ABM24112.1"/>
    <property type="molecule type" value="Genomic_DNA"/>
</dbReference>
<dbReference type="RefSeq" id="WP_007649794.1">
    <property type="nucleotide sequence ID" value="NC_008750.1"/>
</dbReference>
<dbReference type="SMR" id="A1RHG7"/>
<dbReference type="GeneID" id="67444352"/>
<dbReference type="KEGG" id="shw:Sputw3181_1269"/>
<dbReference type="HOGENOM" id="CLU_164837_2_2_6"/>
<dbReference type="Proteomes" id="UP000002597">
    <property type="component" value="Chromosome"/>
</dbReference>
<dbReference type="GO" id="GO:0005829">
    <property type="term" value="C:cytosol"/>
    <property type="evidence" value="ECO:0007669"/>
    <property type="project" value="TreeGrafter"/>
</dbReference>
<dbReference type="GO" id="GO:0048027">
    <property type="term" value="F:mRNA 5'-UTR binding"/>
    <property type="evidence" value="ECO:0007669"/>
    <property type="project" value="UniProtKB-UniRule"/>
</dbReference>
<dbReference type="GO" id="GO:0006402">
    <property type="term" value="P:mRNA catabolic process"/>
    <property type="evidence" value="ECO:0007669"/>
    <property type="project" value="InterPro"/>
</dbReference>
<dbReference type="GO" id="GO:0045947">
    <property type="term" value="P:negative regulation of translational initiation"/>
    <property type="evidence" value="ECO:0007669"/>
    <property type="project" value="UniProtKB-UniRule"/>
</dbReference>
<dbReference type="GO" id="GO:0045948">
    <property type="term" value="P:positive regulation of translational initiation"/>
    <property type="evidence" value="ECO:0007669"/>
    <property type="project" value="UniProtKB-UniRule"/>
</dbReference>
<dbReference type="GO" id="GO:0006109">
    <property type="term" value="P:regulation of carbohydrate metabolic process"/>
    <property type="evidence" value="ECO:0007669"/>
    <property type="project" value="UniProtKB-UniRule"/>
</dbReference>
<dbReference type="FunFam" id="2.60.40.4380:FF:000001">
    <property type="entry name" value="Translational regulator CsrA"/>
    <property type="match status" value="1"/>
</dbReference>
<dbReference type="Gene3D" id="2.60.40.4380">
    <property type="entry name" value="Translational regulator CsrA"/>
    <property type="match status" value="1"/>
</dbReference>
<dbReference type="HAMAP" id="MF_00167">
    <property type="entry name" value="CsrA"/>
    <property type="match status" value="1"/>
</dbReference>
<dbReference type="InterPro" id="IPR003751">
    <property type="entry name" value="CsrA"/>
</dbReference>
<dbReference type="InterPro" id="IPR036107">
    <property type="entry name" value="CsrA_sf"/>
</dbReference>
<dbReference type="NCBIfam" id="TIGR00202">
    <property type="entry name" value="csrA"/>
    <property type="match status" value="1"/>
</dbReference>
<dbReference type="NCBIfam" id="NF002469">
    <property type="entry name" value="PRK01712.1"/>
    <property type="match status" value="1"/>
</dbReference>
<dbReference type="PANTHER" id="PTHR34984">
    <property type="entry name" value="CARBON STORAGE REGULATOR"/>
    <property type="match status" value="1"/>
</dbReference>
<dbReference type="PANTHER" id="PTHR34984:SF1">
    <property type="entry name" value="CARBON STORAGE REGULATOR"/>
    <property type="match status" value="1"/>
</dbReference>
<dbReference type="Pfam" id="PF02599">
    <property type="entry name" value="CsrA"/>
    <property type="match status" value="1"/>
</dbReference>
<dbReference type="SUPFAM" id="SSF117130">
    <property type="entry name" value="CsrA-like"/>
    <property type="match status" value="1"/>
</dbReference>
<comment type="function">
    <text evidence="1">A key translational regulator that binds mRNA to regulate translation initiation and/or mRNA stability. Mediates global changes in gene expression, shifting from rapid growth to stress survival by linking envelope stress, the stringent response and the catabolite repression systems. Usually binds in the 5'-UTR; binding at or near the Shine-Dalgarno sequence prevents ribosome-binding, repressing translation, binding elsewhere in the 5'-UTR can activate translation and/or stabilize the mRNA. Its function is antagonized by small RNA(s).</text>
</comment>
<comment type="subunit">
    <text evidence="1">Homodimer; the beta-strands of each monomer intercalate to form a hydrophobic core, while the alpha-helices form wings that extend away from the core.</text>
</comment>
<comment type="subcellular location">
    <subcellularLocation>
        <location evidence="1">Cytoplasm</location>
    </subcellularLocation>
</comment>
<comment type="similarity">
    <text evidence="1">Belongs to the CsrA/RsmA family.</text>
</comment>
<evidence type="ECO:0000255" key="1">
    <source>
        <dbReference type="HAMAP-Rule" id="MF_00167"/>
    </source>
</evidence>
<keyword id="KW-0010">Activator</keyword>
<keyword id="KW-0963">Cytoplasm</keyword>
<keyword id="KW-0678">Repressor</keyword>
<keyword id="KW-0694">RNA-binding</keyword>
<keyword id="KW-0810">Translation regulation</keyword>